<accession>A0ALD9</accession>
<feature type="chain" id="PRO_1000019218" description="Enolase">
    <location>
        <begin position="1"/>
        <end position="430"/>
    </location>
</feature>
<feature type="active site" description="Proton donor" evidence="1">
    <location>
        <position position="205"/>
    </location>
</feature>
<feature type="active site" description="Proton acceptor" evidence="1">
    <location>
        <position position="339"/>
    </location>
</feature>
<feature type="binding site" evidence="1">
    <location>
        <position position="163"/>
    </location>
    <ligand>
        <name>(2R)-2-phosphoglycerate</name>
        <dbReference type="ChEBI" id="CHEBI:58289"/>
    </ligand>
</feature>
<feature type="binding site" evidence="1">
    <location>
        <position position="242"/>
    </location>
    <ligand>
        <name>Mg(2+)</name>
        <dbReference type="ChEBI" id="CHEBI:18420"/>
    </ligand>
</feature>
<feature type="binding site" evidence="1">
    <location>
        <position position="287"/>
    </location>
    <ligand>
        <name>Mg(2+)</name>
        <dbReference type="ChEBI" id="CHEBI:18420"/>
    </ligand>
</feature>
<feature type="binding site" evidence="1">
    <location>
        <position position="314"/>
    </location>
    <ligand>
        <name>Mg(2+)</name>
        <dbReference type="ChEBI" id="CHEBI:18420"/>
    </ligand>
</feature>
<feature type="binding site" evidence="1">
    <location>
        <position position="339"/>
    </location>
    <ligand>
        <name>(2R)-2-phosphoglycerate</name>
        <dbReference type="ChEBI" id="CHEBI:58289"/>
    </ligand>
</feature>
<feature type="binding site" evidence="1">
    <location>
        <position position="368"/>
    </location>
    <ligand>
        <name>(2R)-2-phosphoglycerate</name>
        <dbReference type="ChEBI" id="CHEBI:58289"/>
    </ligand>
</feature>
<feature type="binding site" evidence="1">
    <location>
        <position position="369"/>
    </location>
    <ligand>
        <name>(2R)-2-phosphoglycerate</name>
        <dbReference type="ChEBI" id="CHEBI:58289"/>
    </ligand>
</feature>
<feature type="binding site" evidence="1">
    <location>
        <position position="390"/>
    </location>
    <ligand>
        <name>(2R)-2-phosphoglycerate</name>
        <dbReference type="ChEBI" id="CHEBI:58289"/>
    </ligand>
</feature>
<dbReference type="EC" id="4.2.1.11" evidence="1"/>
<dbReference type="EMBL" id="AM263198">
    <property type="protein sequence ID" value="CAK21821.1"/>
    <property type="molecule type" value="Genomic_DNA"/>
</dbReference>
<dbReference type="RefSeq" id="WP_003727923.1">
    <property type="nucleotide sequence ID" value="NC_008555.1"/>
</dbReference>
<dbReference type="SMR" id="A0ALD9"/>
<dbReference type="STRING" id="386043.lwe2403"/>
<dbReference type="GeneID" id="93235861"/>
<dbReference type="KEGG" id="lwe:lwe2403"/>
<dbReference type="eggNOG" id="COG0148">
    <property type="taxonomic scope" value="Bacteria"/>
</dbReference>
<dbReference type="HOGENOM" id="CLU_031223_2_1_9"/>
<dbReference type="OrthoDB" id="9804716at2"/>
<dbReference type="UniPathway" id="UPA00109">
    <property type="reaction ID" value="UER00187"/>
</dbReference>
<dbReference type="Proteomes" id="UP000000779">
    <property type="component" value="Chromosome"/>
</dbReference>
<dbReference type="GO" id="GO:0009986">
    <property type="term" value="C:cell surface"/>
    <property type="evidence" value="ECO:0007669"/>
    <property type="project" value="UniProtKB-SubCell"/>
</dbReference>
<dbReference type="GO" id="GO:0005576">
    <property type="term" value="C:extracellular region"/>
    <property type="evidence" value="ECO:0007669"/>
    <property type="project" value="UniProtKB-SubCell"/>
</dbReference>
<dbReference type="GO" id="GO:0000015">
    <property type="term" value="C:phosphopyruvate hydratase complex"/>
    <property type="evidence" value="ECO:0007669"/>
    <property type="project" value="InterPro"/>
</dbReference>
<dbReference type="GO" id="GO:0000287">
    <property type="term" value="F:magnesium ion binding"/>
    <property type="evidence" value="ECO:0007669"/>
    <property type="project" value="UniProtKB-UniRule"/>
</dbReference>
<dbReference type="GO" id="GO:0004634">
    <property type="term" value="F:phosphopyruvate hydratase activity"/>
    <property type="evidence" value="ECO:0007669"/>
    <property type="project" value="UniProtKB-UniRule"/>
</dbReference>
<dbReference type="GO" id="GO:0006096">
    <property type="term" value="P:glycolytic process"/>
    <property type="evidence" value="ECO:0007669"/>
    <property type="project" value="UniProtKB-UniRule"/>
</dbReference>
<dbReference type="CDD" id="cd03313">
    <property type="entry name" value="enolase"/>
    <property type="match status" value="1"/>
</dbReference>
<dbReference type="FunFam" id="3.20.20.120:FF:000001">
    <property type="entry name" value="Enolase"/>
    <property type="match status" value="1"/>
</dbReference>
<dbReference type="FunFam" id="3.30.390.10:FF:000001">
    <property type="entry name" value="Enolase"/>
    <property type="match status" value="1"/>
</dbReference>
<dbReference type="Gene3D" id="3.20.20.120">
    <property type="entry name" value="Enolase-like C-terminal domain"/>
    <property type="match status" value="1"/>
</dbReference>
<dbReference type="Gene3D" id="3.30.390.10">
    <property type="entry name" value="Enolase-like, N-terminal domain"/>
    <property type="match status" value="1"/>
</dbReference>
<dbReference type="HAMAP" id="MF_00318">
    <property type="entry name" value="Enolase"/>
    <property type="match status" value="1"/>
</dbReference>
<dbReference type="InterPro" id="IPR000941">
    <property type="entry name" value="Enolase"/>
</dbReference>
<dbReference type="InterPro" id="IPR036849">
    <property type="entry name" value="Enolase-like_C_sf"/>
</dbReference>
<dbReference type="InterPro" id="IPR029017">
    <property type="entry name" value="Enolase-like_N"/>
</dbReference>
<dbReference type="InterPro" id="IPR020810">
    <property type="entry name" value="Enolase_C"/>
</dbReference>
<dbReference type="InterPro" id="IPR020809">
    <property type="entry name" value="Enolase_CS"/>
</dbReference>
<dbReference type="InterPro" id="IPR020811">
    <property type="entry name" value="Enolase_N"/>
</dbReference>
<dbReference type="NCBIfam" id="TIGR01060">
    <property type="entry name" value="eno"/>
    <property type="match status" value="1"/>
</dbReference>
<dbReference type="PANTHER" id="PTHR11902">
    <property type="entry name" value="ENOLASE"/>
    <property type="match status" value="1"/>
</dbReference>
<dbReference type="PANTHER" id="PTHR11902:SF1">
    <property type="entry name" value="ENOLASE"/>
    <property type="match status" value="1"/>
</dbReference>
<dbReference type="Pfam" id="PF00113">
    <property type="entry name" value="Enolase_C"/>
    <property type="match status" value="1"/>
</dbReference>
<dbReference type="Pfam" id="PF03952">
    <property type="entry name" value="Enolase_N"/>
    <property type="match status" value="1"/>
</dbReference>
<dbReference type="PIRSF" id="PIRSF001400">
    <property type="entry name" value="Enolase"/>
    <property type="match status" value="1"/>
</dbReference>
<dbReference type="PRINTS" id="PR00148">
    <property type="entry name" value="ENOLASE"/>
</dbReference>
<dbReference type="SFLD" id="SFLDF00002">
    <property type="entry name" value="enolase"/>
    <property type="match status" value="1"/>
</dbReference>
<dbReference type="SFLD" id="SFLDG00178">
    <property type="entry name" value="enolase"/>
    <property type="match status" value="1"/>
</dbReference>
<dbReference type="SMART" id="SM01192">
    <property type="entry name" value="Enolase_C"/>
    <property type="match status" value="1"/>
</dbReference>
<dbReference type="SMART" id="SM01193">
    <property type="entry name" value="Enolase_N"/>
    <property type="match status" value="1"/>
</dbReference>
<dbReference type="SUPFAM" id="SSF51604">
    <property type="entry name" value="Enolase C-terminal domain-like"/>
    <property type="match status" value="1"/>
</dbReference>
<dbReference type="SUPFAM" id="SSF54826">
    <property type="entry name" value="Enolase N-terminal domain-like"/>
    <property type="match status" value="1"/>
</dbReference>
<dbReference type="PROSITE" id="PS00164">
    <property type="entry name" value="ENOLASE"/>
    <property type="match status" value="1"/>
</dbReference>
<keyword id="KW-0963">Cytoplasm</keyword>
<keyword id="KW-0324">Glycolysis</keyword>
<keyword id="KW-0456">Lyase</keyword>
<keyword id="KW-0460">Magnesium</keyword>
<keyword id="KW-0479">Metal-binding</keyword>
<keyword id="KW-0964">Secreted</keyword>
<protein>
    <recommendedName>
        <fullName evidence="1">Enolase</fullName>
        <ecNumber evidence="1">4.2.1.11</ecNumber>
    </recommendedName>
    <alternativeName>
        <fullName evidence="1">2-phospho-D-glycerate hydro-lyase</fullName>
    </alternativeName>
    <alternativeName>
        <fullName evidence="1">2-phosphoglycerate dehydratase</fullName>
    </alternativeName>
</protein>
<evidence type="ECO:0000255" key="1">
    <source>
        <dbReference type="HAMAP-Rule" id="MF_00318"/>
    </source>
</evidence>
<gene>
    <name evidence="1" type="primary">eno</name>
    <name type="ordered locus">lwe2403</name>
</gene>
<organism>
    <name type="scientific">Listeria welshimeri serovar 6b (strain ATCC 35897 / DSM 20650 / CCUG 15529 / CIP 8149 / NCTC 11857 / SLCC 5334 / V8)</name>
    <dbReference type="NCBI Taxonomy" id="386043"/>
    <lineage>
        <taxon>Bacteria</taxon>
        <taxon>Bacillati</taxon>
        <taxon>Bacillota</taxon>
        <taxon>Bacilli</taxon>
        <taxon>Bacillales</taxon>
        <taxon>Listeriaceae</taxon>
        <taxon>Listeria</taxon>
    </lineage>
</organism>
<name>ENO_LISW6</name>
<sequence length="430" mass="46472">MSIITEVYAREVLDSRGNPTVEVEVYTEAGAFGRALVPSGASTGEYEAVELRDGDKARYLGKGVLKAVENVNDIIADKIIGFDVTDQIGIDKAMIELDGTPNKGKLGANAILGVSLAAARAAADELGVHLYEYLGGVNGKVLPVPMMNILNGGEHADNNVDVQEFMVMPVGAPNFKEALRMGAEILHALKAVLKGKGLNTGVGDEGGFAPNLKSNEEALETIMQAIKDAGYKPGEEVKLAMDAASSEFYNRETGKYELKGEGVTRTSEEMVTWYEEMITKYPIISIEDGLDENDWDGFKLLTERIGDRVQLVGDDLFVTNTTKLKEGIEKGIANSILIKVNQIGTLTETLDAIEMAKRAGYTAVISHRSGETEDSTIADIAVATNAGQIKTGAPTRTDRVAKYNQLLRIEDNLADLAEYHGNDTFYNLKK</sequence>
<proteinExistence type="inferred from homology"/>
<comment type="function">
    <text evidence="1">Catalyzes the reversible conversion of 2-phosphoglycerate (2-PG) into phosphoenolpyruvate (PEP). It is essential for the degradation of carbohydrates via glycolysis.</text>
</comment>
<comment type="catalytic activity">
    <reaction evidence="1">
        <text>(2R)-2-phosphoglycerate = phosphoenolpyruvate + H2O</text>
        <dbReference type="Rhea" id="RHEA:10164"/>
        <dbReference type="ChEBI" id="CHEBI:15377"/>
        <dbReference type="ChEBI" id="CHEBI:58289"/>
        <dbReference type="ChEBI" id="CHEBI:58702"/>
        <dbReference type="EC" id="4.2.1.11"/>
    </reaction>
</comment>
<comment type="cofactor">
    <cofactor evidence="1">
        <name>Mg(2+)</name>
        <dbReference type="ChEBI" id="CHEBI:18420"/>
    </cofactor>
    <text evidence="1">Binds a second Mg(2+) ion via substrate during catalysis.</text>
</comment>
<comment type="pathway">
    <text evidence="1">Carbohydrate degradation; glycolysis; pyruvate from D-glyceraldehyde 3-phosphate: step 4/5.</text>
</comment>
<comment type="subcellular location">
    <subcellularLocation>
        <location evidence="1">Cytoplasm</location>
    </subcellularLocation>
    <subcellularLocation>
        <location evidence="1">Secreted</location>
    </subcellularLocation>
    <subcellularLocation>
        <location evidence="1">Cell surface</location>
    </subcellularLocation>
    <text evidence="1">Fractions of enolase are present in both the cytoplasm and on the cell surface.</text>
</comment>
<comment type="similarity">
    <text evidence="1">Belongs to the enolase family.</text>
</comment>
<reference key="1">
    <citation type="journal article" date="2006" name="J. Bacteriol.">
        <title>Whole-genome sequence of Listeria welshimeri reveals common steps in genome reduction with Listeria innocua as compared to Listeria monocytogenes.</title>
        <authorList>
            <person name="Hain T."/>
            <person name="Steinweg C."/>
            <person name="Kuenne C.T."/>
            <person name="Billion A."/>
            <person name="Ghai R."/>
            <person name="Chatterjee S.S."/>
            <person name="Domann E."/>
            <person name="Kaerst U."/>
            <person name="Goesmann A."/>
            <person name="Bekel T."/>
            <person name="Bartels D."/>
            <person name="Kaiser O."/>
            <person name="Meyer F."/>
            <person name="Puehler A."/>
            <person name="Weisshaar B."/>
            <person name="Wehland J."/>
            <person name="Liang C."/>
            <person name="Dandekar T."/>
            <person name="Lampidis R."/>
            <person name="Kreft J."/>
            <person name="Goebel W."/>
            <person name="Chakraborty T."/>
        </authorList>
    </citation>
    <scope>NUCLEOTIDE SEQUENCE [LARGE SCALE GENOMIC DNA]</scope>
    <source>
        <strain>ATCC 35897 / DSM 20650 / CCUG 15529 / CIP 8149 / NCTC 11857 / SLCC 5334 / V8</strain>
    </source>
</reference>